<sequence>MIKYIKGDLFTHTPSSRSAISIFAHACNCRGSWGGGIATVFYRKFPSAYKIYADYCSTHADDPSKLLGTTLLIPSSSSDPGNENGQKIVYVACLFTSDFYGKKKLTPGDIAANTDLSMKDLDTQLESLKEEKEIESTDQGEVVVNMPKINAGLFAVPWEITEDVLNKFNNLHINVYVVD</sequence>
<dbReference type="EC" id="3.1.3.84"/>
<dbReference type="EMBL" id="CR382137">
    <property type="protein sequence ID" value="CAG88075.2"/>
    <property type="molecule type" value="Genomic_DNA"/>
</dbReference>
<dbReference type="RefSeq" id="XP_459836.2">
    <property type="nucleotide sequence ID" value="XM_459836.1"/>
</dbReference>
<dbReference type="SMR" id="Q6BPN4"/>
<dbReference type="FunCoup" id="Q6BPN4">
    <property type="interactions" value="8"/>
</dbReference>
<dbReference type="GeneID" id="2901966"/>
<dbReference type="KEGG" id="dha:DEHA2E12188g"/>
<dbReference type="VEuPathDB" id="FungiDB:DEHA2E12188g"/>
<dbReference type="eggNOG" id="ENOG502S60W">
    <property type="taxonomic scope" value="Eukaryota"/>
</dbReference>
<dbReference type="HOGENOM" id="CLU_054419_1_2_1"/>
<dbReference type="InParanoid" id="Q6BPN4"/>
<dbReference type="OMA" id="CQGSWGK"/>
<dbReference type="OrthoDB" id="2155246at2759"/>
<dbReference type="Proteomes" id="UP000000599">
    <property type="component" value="Chromosome E"/>
</dbReference>
<dbReference type="GO" id="GO:0047407">
    <property type="term" value="F:ADP-ribosyl-[dinitrogen reductase] hydrolase activity"/>
    <property type="evidence" value="ECO:0007669"/>
    <property type="project" value="EnsemblFungi"/>
</dbReference>
<dbReference type="GO" id="GO:0004721">
    <property type="term" value="F:phosphoprotein phosphatase activity"/>
    <property type="evidence" value="ECO:0007669"/>
    <property type="project" value="UniProtKB-KW"/>
</dbReference>
<dbReference type="GO" id="GO:0140291">
    <property type="term" value="P:peptidyl-glutamate ADP-deribosylation"/>
    <property type="evidence" value="ECO:0007669"/>
    <property type="project" value="TreeGrafter"/>
</dbReference>
<dbReference type="CDD" id="cd02901">
    <property type="entry name" value="Macro_Poa1p-like"/>
    <property type="match status" value="1"/>
</dbReference>
<dbReference type="Gene3D" id="3.40.220.10">
    <property type="entry name" value="Leucine Aminopeptidase, subunit E, domain 1"/>
    <property type="match status" value="1"/>
</dbReference>
<dbReference type="InterPro" id="IPR050892">
    <property type="entry name" value="ADP-ribose_metab_enzymes"/>
</dbReference>
<dbReference type="InterPro" id="IPR002589">
    <property type="entry name" value="Macro_dom"/>
</dbReference>
<dbReference type="InterPro" id="IPR043472">
    <property type="entry name" value="Macro_dom-like"/>
</dbReference>
<dbReference type="PANTHER" id="PTHR12521:SF0">
    <property type="entry name" value="ADP-RIBOSE GLYCOHYDROLASE OARD1"/>
    <property type="match status" value="1"/>
</dbReference>
<dbReference type="PANTHER" id="PTHR12521">
    <property type="entry name" value="PROTEIN C6ORF130"/>
    <property type="match status" value="1"/>
</dbReference>
<dbReference type="Pfam" id="PF01661">
    <property type="entry name" value="Macro"/>
    <property type="match status" value="1"/>
</dbReference>
<dbReference type="SMART" id="SM00506">
    <property type="entry name" value="A1pp"/>
    <property type="match status" value="1"/>
</dbReference>
<dbReference type="SUPFAM" id="SSF52949">
    <property type="entry name" value="Macro domain-like"/>
    <property type="match status" value="1"/>
</dbReference>
<dbReference type="PROSITE" id="PS51154">
    <property type="entry name" value="MACRO"/>
    <property type="match status" value="1"/>
</dbReference>
<feature type="chain" id="PRO_0000324907" description="ADP-ribose 1''-phosphate phosphatase">
    <location>
        <begin position="1"/>
        <end position="179"/>
    </location>
</feature>
<feature type="domain" description="Macro" evidence="2">
    <location>
        <begin position="1"/>
        <end position="179"/>
    </location>
</feature>
<feature type="binding site" evidence="1">
    <location>
        <begin position="7"/>
        <end position="9"/>
    </location>
    <ligand>
        <name>substrate</name>
    </ligand>
</feature>
<feature type="binding site" evidence="1">
    <location>
        <begin position="26"/>
        <end position="28"/>
    </location>
    <ligand>
        <name>substrate</name>
    </ligand>
</feature>
<feature type="binding site" evidence="1">
    <location>
        <begin position="33"/>
        <end position="38"/>
    </location>
    <ligand>
        <name>substrate</name>
    </ligand>
</feature>
<feature type="binding site" evidence="1">
    <location>
        <begin position="149"/>
        <end position="155"/>
    </location>
    <ligand>
        <name>substrate</name>
    </ligand>
</feature>
<keyword id="KW-0378">Hydrolase</keyword>
<keyword id="KW-0904">Protein phosphatase</keyword>
<keyword id="KW-1185">Reference proteome</keyword>
<name>POA1_DEBHA</name>
<proteinExistence type="inferred from homology"/>
<protein>
    <recommendedName>
        <fullName>ADP-ribose 1''-phosphate phosphatase</fullName>
        <ecNumber>3.1.3.84</ecNumber>
    </recommendedName>
</protein>
<comment type="function">
    <text evidence="1">Highly specific phosphatase involved in the metabolism of ADP-ribose 1''-phosphate (Appr1p) which is produced as a consequence of tRNA splicing.</text>
</comment>
<comment type="catalytic activity">
    <reaction>
        <text>ADP-alpha-D-ribose 1''-phosphate + H2O = ADP-D-ribose + phosphate</text>
        <dbReference type="Rhea" id="RHEA:25029"/>
        <dbReference type="ChEBI" id="CHEBI:15377"/>
        <dbReference type="ChEBI" id="CHEBI:43474"/>
        <dbReference type="ChEBI" id="CHEBI:57967"/>
        <dbReference type="ChEBI" id="CHEBI:58753"/>
        <dbReference type="EC" id="3.1.3.84"/>
    </reaction>
</comment>
<comment type="similarity">
    <text evidence="3">Belongs to the POA1 family.</text>
</comment>
<reference key="1">
    <citation type="journal article" date="2004" name="Nature">
        <title>Genome evolution in yeasts.</title>
        <authorList>
            <person name="Dujon B."/>
            <person name="Sherman D."/>
            <person name="Fischer G."/>
            <person name="Durrens P."/>
            <person name="Casaregola S."/>
            <person name="Lafontaine I."/>
            <person name="de Montigny J."/>
            <person name="Marck C."/>
            <person name="Neuveglise C."/>
            <person name="Talla E."/>
            <person name="Goffard N."/>
            <person name="Frangeul L."/>
            <person name="Aigle M."/>
            <person name="Anthouard V."/>
            <person name="Babour A."/>
            <person name="Barbe V."/>
            <person name="Barnay S."/>
            <person name="Blanchin S."/>
            <person name="Beckerich J.-M."/>
            <person name="Beyne E."/>
            <person name="Bleykasten C."/>
            <person name="Boisrame A."/>
            <person name="Boyer J."/>
            <person name="Cattolico L."/>
            <person name="Confanioleri F."/>
            <person name="de Daruvar A."/>
            <person name="Despons L."/>
            <person name="Fabre E."/>
            <person name="Fairhead C."/>
            <person name="Ferry-Dumazet H."/>
            <person name="Groppi A."/>
            <person name="Hantraye F."/>
            <person name="Hennequin C."/>
            <person name="Jauniaux N."/>
            <person name="Joyet P."/>
            <person name="Kachouri R."/>
            <person name="Kerrest A."/>
            <person name="Koszul R."/>
            <person name="Lemaire M."/>
            <person name="Lesur I."/>
            <person name="Ma L."/>
            <person name="Muller H."/>
            <person name="Nicaud J.-M."/>
            <person name="Nikolski M."/>
            <person name="Oztas S."/>
            <person name="Ozier-Kalogeropoulos O."/>
            <person name="Pellenz S."/>
            <person name="Potier S."/>
            <person name="Richard G.-F."/>
            <person name="Straub M.-L."/>
            <person name="Suleau A."/>
            <person name="Swennen D."/>
            <person name="Tekaia F."/>
            <person name="Wesolowski-Louvel M."/>
            <person name="Westhof E."/>
            <person name="Wirth B."/>
            <person name="Zeniou-Meyer M."/>
            <person name="Zivanovic Y."/>
            <person name="Bolotin-Fukuhara M."/>
            <person name="Thierry A."/>
            <person name="Bouchier C."/>
            <person name="Caudron B."/>
            <person name="Scarpelli C."/>
            <person name="Gaillardin C."/>
            <person name="Weissenbach J."/>
            <person name="Wincker P."/>
            <person name="Souciet J.-L."/>
        </authorList>
    </citation>
    <scope>NUCLEOTIDE SEQUENCE [LARGE SCALE GENOMIC DNA]</scope>
    <source>
        <strain>ATCC 36239 / CBS 767 / BCRC 21394 / JCM 1990 / NBRC 0083 / IGC 2968</strain>
    </source>
</reference>
<gene>
    <name type="primary">POA1</name>
    <name type="ordered locus">DEHA2E12188g</name>
</gene>
<organism>
    <name type="scientific">Debaryomyces hansenii (strain ATCC 36239 / CBS 767 / BCRC 21394 / JCM 1990 / NBRC 0083 / IGC 2968)</name>
    <name type="common">Yeast</name>
    <name type="synonym">Torulaspora hansenii</name>
    <dbReference type="NCBI Taxonomy" id="284592"/>
    <lineage>
        <taxon>Eukaryota</taxon>
        <taxon>Fungi</taxon>
        <taxon>Dikarya</taxon>
        <taxon>Ascomycota</taxon>
        <taxon>Saccharomycotina</taxon>
        <taxon>Pichiomycetes</taxon>
        <taxon>Debaryomycetaceae</taxon>
        <taxon>Debaryomyces</taxon>
    </lineage>
</organism>
<accession>Q6BPN4</accession>
<evidence type="ECO:0000250" key="1"/>
<evidence type="ECO:0000255" key="2">
    <source>
        <dbReference type="PROSITE-ProRule" id="PRU00490"/>
    </source>
</evidence>
<evidence type="ECO:0000305" key="3"/>